<name>RL7_CAUVN</name>
<gene>
    <name evidence="1" type="primary">rplL</name>
    <name type="ordered locus">CCNA_00531</name>
</gene>
<comment type="function">
    <text evidence="1">Forms part of the ribosomal stalk which helps the ribosome interact with GTP-bound translation factors. Is thus essential for accurate translation.</text>
</comment>
<comment type="subunit">
    <text evidence="1">Homodimer. Part of the ribosomal stalk of the 50S ribosomal subunit. Forms a multimeric L10(L12)X complex, where L10 forms an elongated spine to which 2 to 4 L12 dimers bind in a sequential fashion. Binds GTP-bound translation factors.</text>
</comment>
<comment type="similarity">
    <text evidence="1">Belongs to the bacterial ribosomal protein bL12 family.</text>
</comment>
<feature type="chain" id="PRO_1000195781" description="Large ribosomal subunit protein bL12">
    <location>
        <begin position="1"/>
        <end position="127"/>
    </location>
</feature>
<evidence type="ECO:0000255" key="1">
    <source>
        <dbReference type="HAMAP-Rule" id="MF_00368"/>
    </source>
</evidence>
<evidence type="ECO:0000305" key="2"/>
<dbReference type="EMBL" id="CP001340">
    <property type="protein sequence ID" value="ACL93996.1"/>
    <property type="molecule type" value="Genomic_DNA"/>
</dbReference>
<dbReference type="RefSeq" id="WP_010918385.1">
    <property type="nucleotide sequence ID" value="NC_011916.1"/>
</dbReference>
<dbReference type="RefSeq" id="YP_002515904.1">
    <property type="nucleotide sequence ID" value="NC_011916.1"/>
</dbReference>
<dbReference type="SMR" id="B8GZW2"/>
<dbReference type="GeneID" id="7332221"/>
<dbReference type="KEGG" id="ccs:CCNA_00531"/>
<dbReference type="PATRIC" id="fig|565050.3.peg.523"/>
<dbReference type="HOGENOM" id="CLU_086499_3_0_5"/>
<dbReference type="OrthoDB" id="9811748at2"/>
<dbReference type="PhylomeDB" id="B8GZW2"/>
<dbReference type="Proteomes" id="UP000001364">
    <property type="component" value="Chromosome"/>
</dbReference>
<dbReference type="GO" id="GO:0022625">
    <property type="term" value="C:cytosolic large ribosomal subunit"/>
    <property type="evidence" value="ECO:0007669"/>
    <property type="project" value="TreeGrafter"/>
</dbReference>
<dbReference type="GO" id="GO:0003729">
    <property type="term" value="F:mRNA binding"/>
    <property type="evidence" value="ECO:0007669"/>
    <property type="project" value="TreeGrafter"/>
</dbReference>
<dbReference type="GO" id="GO:0003735">
    <property type="term" value="F:structural constituent of ribosome"/>
    <property type="evidence" value="ECO:0007669"/>
    <property type="project" value="InterPro"/>
</dbReference>
<dbReference type="GO" id="GO:0006412">
    <property type="term" value="P:translation"/>
    <property type="evidence" value="ECO:0007669"/>
    <property type="project" value="UniProtKB-UniRule"/>
</dbReference>
<dbReference type="CDD" id="cd00387">
    <property type="entry name" value="Ribosomal_L7_L12"/>
    <property type="match status" value="1"/>
</dbReference>
<dbReference type="FunFam" id="3.30.1390.10:FF:000001">
    <property type="entry name" value="50S ribosomal protein L7/L12"/>
    <property type="match status" value="1"/>
</dbReference>
<dbReference type="Gene3D" id="3.30.1390.10">
    <property type="match status" value="1"/>
</dbReference>
<dbReference type="Gene3D" id="1.20.5.710">
    <property type="entry name" value="Single helix bin"/>
    <property type="match status" value="1"/>
</dbReference>
<dbReference type="HAMAP" id="MF_00368">
    <property type="entry name" value="Ribosomal_bL12"/>
    <property type="match status" value="1"/>
</dbReference>
<dbReference type="InterPro" id="IPR000206">
    <property type="entry name" value="Ribosomal_bL12"/>
</dbReference>
<dbReference type="InterPro" id="IPR013823">
    <property type="entry name" value="Ribosomal_bL12_C"/>
</dbReference>
<dbReference type="InterPro" id="IPR014719">
    <property type="entry name" value="Ribosomal_bL12_C/ClpS-like"/>
</dbReference>
<dbReference type="InterPro" id="IPR008932">
    <property type="entry name" value="Ribosomal_bL12_oligo"/>
</dbReference>
<dbReference type="InterPro" id="IPR036235">
    <property type="entry name" value="Ribosomal_bL12_oligo_N_sf"/>
</dbReference>
<dbReference type="NCBIfam" id="TIGR00855">
    <property type="entry name" value="L12"/>
    <property type="match status" value="1"/>
</dbReference>
<dbReference type="PANTHER" id="PTHR45987">
    <property type="entry name" value="39S RIBOSOMAL PROTEIN L12"/>
    <property type="match status" value="1"/>
</dbReference>
<dbReference type="PANTHER" id="PTHR45987:SF4">
    <property type="entry name" value="LARGE RIBOSOMAL SUBUNIT PROTEIN BL12M"/>
    <property type="match status" value="1"/>
</dbReference>
<dbReference type="Pfam" id="PF00542">
    <property type="entry name" value="Ribosomal_L12"/>
    <property type="match status" value="1"/>
</dbReference>
<dbReference type="Pfam" id="PF16320">
    <property type="entry name" value="Ribosomal_L12_N"/>
    <property type="match status" value="1"/>
</dbReference>
<dbReference type="SUPFAM" id="SSF54736">
    <property type="entry name" value="ClpS-like"/>
    <property type="match status" value="1"/>
</dbReference>
<dbReference type="SUPFAM" id="SSF48300">
    <property type="entry name" value="Ribosomal protein L7/12, oligomerisation (N-terminal) domain"/>
    <property type="match status" value="1"/>
</dbReference>
<proteinExistence type="inferred from homology"/>
<keyword id="KW-1185">Reference proteome</keyword>
<keyword id="KW-0687">Ribonucleoprotein</keyword>
<keyword id="KW-0689">Ribosomal protein</keyword>
<sequence length="127" mass="13289">MSKLEKLVEELSTLSVLEAAELSKLLEEKWGVSAAAPVAVAAAGGAAAAPAEAAEEQTEFTVVLVDGGDKKINVIKEVRGVRPDLGLKEAKDLVEGAPQNVVENVSKQQAEEISKKLTEAGAKIQIK</sequence>
<reference key="1">
    <citation type="journal article" date="2010" name="J. Bacteriol.">
        <title>The genetic basis of laboratory adaptation in Caulobacter crescentus.</title>
        <authorList>
            <person name="Marks M.E."/>
            <person name="Castro-Rojas C.M."/>
            <person name="Teiling C."/>
            <person name="Du L."/>
            <person name="Kapatral V."/>
            <person name="Walunas T.L."/>
            <person name="Crosson S."/>
        </authorList>
    </citation>
    <scope>NUCLEOTIDE SEQUENCE [LARGE SCALE GENOMIC DNA]</scope>
    <source>
        <strain>NA1000 / CB15N</strain>
    </source>
</reference>
<protein>
    <recommendedName>
        <fullName evidence="1">Large ribosomal subunit protein bL12</fullName>
    </recommendedName>
    <alternativeName>
        <fullName evidence="2">50S ribosomal protein L7/L12</fullName>
    </alternativeName>
</protein>
<organism>
    <name type="scientific">Caulobacter vibrioides (strain NA1000 / CB15N)</name>
    <name type="common">Caulobacter crescentus</name>
    <dbReference type="NCBI Taxonomy" id="565050"/>
    <lineage>
        <taxon>Bacteria</taxon>
        <taxon>Pseudomonadati</taxon>
        <taxon>Pseudomonadota</taxon>
        <taxon>Alphaproteobacteria</taxon>
        <taxon>Caulobacterales</taxon>
        <taxon>Caulobacteraceae</taxon>
        <taxon>Caulobacter</taxon>
    </lineage>
</organism>
<accession>B8GZW2</accession>